<sequence length="397" mass="43420">MKVLVVNAGSSSIKYQVVDMTDESVLAVGLVDRVGIPGTTLDHSPLGKDKVTIKKDLPDHTAGMELVLQVLVNEEYGCIKSMDEIGAVGHRVVHGGEGFAESVVIDDEVKRVIKECFEIAPLHNPPNMMGIEACQRLMPNVKHVAVFDTAFHQTMGPANFMYALPYDVYEKFRVRRYGFHGTSHFYVAHRAAEMLGKPYEECKIITLHLGNGASMAAIKDGKVIDTSMGFTPLEGLVMGTRSGDIDPAIVFFLMDKLGMNSSEANNYFNKKSGMLGLSGVSNDLRDILEAAGSGNERAKIALDVYYNKVKGYIGNYIAKLNGVDCLVFTAGVGENAIDIRENVCANLDYLGIKMDVEKNKVRGKEVDVATADSKVRIFLIPTNEELVIARDTFNLAK</sequence>
<reference key="1">
    <citation type="journal article" date="2010" name="Environ. Microbiol.">
        <title>The genome of Syntrophomonas wolfei: new insights into syntrophic metabolism and biohydrogen production.</title>
        <authorList>
            <person name="Sieber J.R."/>
            <person name="Sims D.R."/>
            <person name="Han C."/>
            <person name="Kim E."/>
            <person name="Lykidis A."/>
            <person name="Lapidus A.L."/>
            <person name="McDonnald E."/>
            <person name="Rohlin L."/>
            <person name="Culley D.E."/>
            <person name="Gunsalus R."/>
            <person name="McInerney M.J."/>
        </authorList>
    </citation>
    <scope>NUCLEOTIDE SEQUENCE [LARGE SCALE GENOMIC DNA]</scope>
    <source>
        <strain>DSM 2245B / Goettingen</strain>
    </source>
</reference>
<organism>
    <name type="scientific">Syntrophomonas wolfei subsp. wolfei (strain DSM 2245B / Goettingen)</name>
    <dbReference type="NCBI Taxonomy" id="335541"/>
    <lineage>
        <taxon>Bacteria</taxon>
        <taxon>Bacillati</taxon>
        <taxon>Bacillota</taxon>
        <taxon>Clostridia</taxon>
        <taxon>Eubacteriales</taxon>
        <taxon>Syntrophomonadaceae</taxon>
        <taxon>Syntrophomonas</taxon>
    </lineage>
</organism>
<proteinExistence type="inferred from homology"/>
<comment type="function">
    <text evidence="1">Catalyzes the formation of acetyl phosphate from acetate and ATP. Can also catalyze the reverse reaction.</text>
</comment>
<comment type="catalytic activity">
    <reaction evidence="1">
        <text>acetate + ATP = acetyl phosphate + ADP</text>
        <dbReference type="Rhea" id="RHEA:11352"/>
        <dbReference type="ChEBI" id="CHEBI:22191"/>
        <dbReference type="ChEBI" id="CHEBI:30089"/>
        <dbReference type="ChEBI" id="CHEBI:30616"/>
        <dbReference type="ChEBI" id="CHEBI:456216"/>
        <dbReference type="EC" id="2.7.2.1"/>
    </reaction>
</comment>
<comment type="cofactor">
    <cofactor evidence="1">
        <name>Mg(2+)</name>
        <dbReference type="ChEBI" id="CHEBI:18420"/>
    </cofactor>
    <cofactor evidence="1">
        <name>Mn(2+)</name>
        <dbReference type="ChEBI" id="CHEBI:29035"/>
    </cofactor>
    <text evidence="1">Mg(2+). Can also accept Mn(2+).</text>
</comment>
<comment type="pathway">
    <text evidence="1">Metabolic intermediate biosynthesis; acetyl-CoA biosynthesis; acetyl-CoA from acetate: step 1/2.</text>
</comment>
<comment type="subunit">
    <text evidence="1">Homodimer.</text>
</comment>
<comment type="subcellular location">
    <subcellularLocation>
        <location evidence="1">Cytoplasm</location>
    </subcellularLocation>
</comment>
<comment type="similarity">
    <text evidence="1">Belongs to the acetokinase family.</text>
</comment>
<protein>
    <recommendedName>
        <fullName evidence="1">Acetate kinase</fullName>
        <ecNumber evidence="1">2.7.2.1</ecNumber>
    </recommendedName>
    <alternativeName>
        <fullName evidence="1">Acetokinase</fullName>
    </alternativeName>
</protein>
<name>ACKA_SYNWW</name>
<feature type="chain" id="PRO_1000002280" description="Acetate kinase">
    <location>
        <begin position="1"/>
        <end position="397"/>
    </location>
</feature>
<feature type="active site" description="Proton donor/acceptor" evidence="1">
    <location>
        <position position="148"/>
    </location>
</feature>
<feature type="binding site" evidence="1">
    <location>
        <position position="7"/>
    </location>
    <ligand>
        <name>Mg(2+)</name>
        <dbReference type="ChEBI" id="CHEBI:18420"/>
    </ligand>
</feature>
<feature type="binding site" evidence="1">
    <location>
        <position position="14"/>
    </location>
    <ligand>
        <name>ATP</name>
        <dbReference type="ChEBI" id="CHEBI:30616"/>
    </ligand>
</feature>
<feature type="binding site" evidence="1">
    <location>
        <position position="91"/>
    </location>
    <ligand>
        <name>substrate</name>
    </ligand>
</feature>
<feature type="binding site" evidence="1">
    <location>
        <begin position="208"/>
        <end position="212"/>
    </location>
    <ligand>
        <name>ATP</name>
        <dbReference type="ChEBI" id="CHEBI:30616"/>
    </ligand>
</feature>
<feature type="binding site" evidence="1">
    <location>
        <begin position="283"/>
        <end position="285"/>
    </location>
    <ligand>
        <name>ATP</name>
        <dbReference type="ChEBI" id="CHEBI:30616"/>
    </ligand>
</feature>
<feature type="binding site" evidence="1">
    <location>
        <begin position="331"/>
        <end position="335"/>
    </location>
    <ligand>
        <name>ATP</name>
        <dbReference type="ChEBI" id="CHEBI:30616"/>
    </ligand>
</feature>
<feature type="binding site" evidence="1">
    <location>
        <position position="384"/>
    </location>
    <ligand>
        <name>Mg(2+)</name>
        <dbReference type="ChEBI" id="CHEBI:18420"/>
    </ligand>
</feature>
<feature type="site" description="Transition state stabilizer" evidence="1">
    <location>
        <position position="180"/>
    </location>
</feature>
<feature type="site" description="Transition state stabilizer" evidence="1">
    <location>
        <position position="241"/>
    </location>
</feature>
<dbReference type="EC" id="2.7.2.1" evidence="1"/>
<dbReference type="EMBL" id="CP000448">
    <property type="protein sequence ID" value="ABI68089.1"/>
    <property type="molecule type" value="Genomic_DNA"/>
</dbReference>
<dbReference type="RefSeq" id="WP_011640194.1">
    <property type="nucleotide sequence ID" value="NC_008346.1"/>
</dbReference>
<dbReference type="SMR" id="Q0AYW5"/>
<dbReference type="STRING" id="335541.Swol_0768"/>
<dbReference type="KEGG" id="swo:Swol_0768"/>
<dbReference type="eggNOG" id="COG0282">
    <property type="taxonomic scope" value="Bacteria"/>
</dbReference>
<dbReference type="HOGENOM" id="CLU_020352_0_1_9"/>
<dbReference type="OrthoDB" id="9802453at2"/>
<dbReference type="UniPathway" id="UPA00340">
    <property type="reaction ID" value="UER00458"/>
</dbReference>
<dbReference type="Proteomes" id="UP000001968">
    <property type="component" value="Chromosome"/>
</dbReference>
<dbReference type="GO" id="GO:0005737">
    <property type="term" value="C:cytoplasm"/>
    <property type="evidence" value="ECO:0007669"/>
    <property type="project" value="UniProtKB-SubCell"/>
</dbReference>
<dbReference type="GO" id="GO:0008776">
    <property type="term" value="F:acetate kinase activity"/>
    <property type="evidence" value="ECO:0007669"/>
    <property type="project" value="UniProtKB-UniRule"/>
</dbReference>
<dbReference type="GO" id="GO:0005524">
    <property type="term" value="F:ATP binding"/>
    <property type="evidence" value="ECO:0007669"/>
    <property type="project" value="UniProtKB-KW"/>
</dbReference>
<dbReference type="GO" id="GO:0000287">
    <property type="term" value="F:magnesium ion binding"/>
    <property type="evidence" value="ECO:0007669"/>
    <property type="project" value="UniProtKB-UniRule"/>
</dbReference>
<dbReference type="GO" id="GO:0006083">
    <property type="term" value="P:acetate metabolic process"/>
    <property type="evidence" value="ECO:0007669"/>
    <property type="project" value="TreeGrafter"/>
</dbReference>
<dbReference type="GO" id="GO:0006085">
    <property type="term" value="P:acetyl-CoA biosynthetic process"/>
    <property type="evidence" value="ECO:0007669"/>
    <property type="project" value="UniProtKB-UniRule"/>
</dbReference>
<dbReference type="CDD" id="cd24010">
    <property type="entry name" value="ASKHA_NBD_AcK_PK"/>
    <property type="match status" value="1"/>
</dbReference>
<dbReference type="Gene3D" id="3.30.420.40">
    <property type="match status" value="2"/>
</dbReference>
<dbReference type="HAMAP" id="MF_00020">
    <property type="entry name" value="Acetate_kinase"/>
    <property type="match status" value="1"/>
</dbReference>
<dbReference type="InterPro" id="IPR004372">
    <property type="entry name" value="Ac/propionate_kinase"/>
</dbReference>
<dbReference type="InterPro" id="IPR000890">
    <property type="entry name" value="Aliphatic_acid_kin_short-chain"/>
</dbReference>
<dbReference type="InterPro" id="IPR023865">
    <property type="entry name" value="Aliphatic_acid_kinase_CS"/>
</dbReference>
<dbReference type="InterPro" id="IPR043129">
    <property type="entry name" value="ATPase_NBD"/>
</dbReference>
<dbReference type="NCBIfam" id="TIGR00016">
    <property type="entry name" value="ackA"/>
    <property type="match status" value="1"/>
</dbReference>
<dbReference type="PANTHER" id="PTHR21060">
    <property type="entry name" value="ACETATE KINASE"/>
    <property type="match status" value="1"/>
</dbReference>
<dbReference type="PANTHER" id="PTHR21060:SF15">
    <property type="entry name" value="ACETATE KINASE-RELATED"/>
    <property type="match status" value="1"/>
</dbReference>
<dbReference type="Pfam" id="PF00871">
    <property type="entry name" value="Acetate_kinase"/>
    <property type="match status" value="1"/>
</dbReference>
<dbReference type="PIRSF" id="PIRSF000722">
    <property type="entry name" value="Acetate_prop_kin"/>
    <property type="match status" value="1"/>
</dbReference>
<dbReference type="PRINTS" id="PR00471">
    <property type="entry name" value="ACETATEKNASE"/>
</dbReference>
<dbReference type="SUPFAM" id="SSF53067">
    <property type="entry name" value="Actin-like ATPase domain"/>
    <property type="match status" value="2"/>
</dbReference>
<dbReference type="PROSITE" id="PS01075">
    <property type="entry name" value="ACETATE_KINASE_1"/>
    <property type="match status" value="1"/>
</dbReference>
<dbReference type="PROSITE" id="PS01076">
    <property type="entry name" value="ACETATE_KINASE_2"/>
    <property type="match status" value="1"/>
</dbReference>
<accession>Q0AYW5</accession>
<evidence type="ECO:0000255" key="1">
    <source>
        <dbReference type="HAMAP-Rule" id="MF_00020"/>
    </source>
</evidence>
<keyword id="KW-0067">ATP-binding</keyword>
<keyword id="KW-0963">Cytoplasm</keyword>
<keyword id="KW-0418">Kinase</keyword>
<keyword id="KW-0460">Magnesium</keyword>
<keyword id="KW-0479">Metal-binding</keyword>
<keyword id="KW-0547">Nucleotide-binding</keyword>
<keyword id="KW-1185">Reference proteome</keyword>
<keyword id="KW-0808">Transferase</keyword>
<gene>
    <name evidence="1" type="primary">ackA</name>
    <name type="ordered locus">Swol_0768</name>
</gene>